<protein>
    <recommendedName>
        <fullName evidence="1">Leucine--tRNA ligase</fullName>
        <ecNumber evidence="1">6.1.1.4</ecNumber>
    </recommendedName>
    <alternativeName>
        <fullName evidence="1">Leucyl-tRNA synthetase</fullName>
        <shortName evidence="1">LeuRS</shortName>
    </alternativeName>
</protein>
<keyword id="KW-0030">Aminoacyl-tRNA synthetase</keyword>
<keyword id="KW-0067">ATP-binding</keyword>
<keyword id="KW-0963">Cytoplasm</keyword>
<keyword id="KW-0436">Ligase</keyword>
<keyword id="KW-0547">Nucleotide-binding</keyword>
<keyword id="KW-0648">Protein biosynthesis</keyword>
<sequence length="967" mass="113824">MPELNFRAIEEKWQKRWLEAKVFEPNIKDKPKEKKFYITVAFPYLSGHLHVGHARTYTIPDVIARFKRMQGYNVLFPMGWHITGSPIVGIAERIKNRDPHTIWIYRDVYKVPEEILWTFEDPVNIVKYFMKAAKETFIRAGFSVDWSREFYTTSLFPPFSKFIEWQFLKLKEKGYIVKGAHRVRWDPVVGTPLGDHDLMEGEDVPILEYVIIKFELKEGDETIYLPAATLRPETVYGVTNMWINPNATYVKAKVKRGGKEETWIISKEAAYKLSFQDREIEVIEEFKGEKLIGKYVRNPVTGDEVIILPAEFVDPDNATGVVMSVPAHAPFDHVALEDLKRESEILVKYDIDPRIVEEITYISLIKLEGYGEFPAVEEVQKLGIKSQKDREKLEQATKTIYKAEYHKGIFKVPPYDGKPVQEVKELIAKEMMEKGIAEIMYEFAEKNVISRFGNRAVIKIIHDQWFIDYGNSEWKEKARKALARMKIYPETRRAQFEAIIDWLDKKACARKVGLGTPLPWDPEWVIESLSDSTIYMAYYTISRHINRLREEGRLDPEKLTPEFFDYIFLEEFSEEREKELEKKTGIPAEIIHEMKEEFEYWYPLDWRCSGKDLIPNHLTFFIFNHVAIFREEHWPKGIAVNGFGTLEGQKMSKSKGNVLNFIDAIEENGADVVRLYIMSLAEHDSDFDWRRKEVGKLRRQLERFYELISQFAEYEAKENVELKTIDKWLLHRLNKAIEGTTKALEEFRTRTAVQWAFYSIMNDLRWYMRRTEGRDDEAKRFVLRKLADIWVRLMAPFTPHICEELWEKLGGEGFVSLAKWPEPVDEWWNEEVEVEEDFIKSLIEDIKEIIEVAKIESPKRAYIYTAPEWKWKVYEVVAEKREFKSAMAELMKDEEIRKHGKEVAKLVQAIIKERAFDVKRIDEEKVLRESKDFLEKELGLEVIINPEEDKGGKKRQAIPLKPAVFIE</sequence>
<gene>
    <name evidence="1" type="primary">leuS</name>
    <name type="ordered locus">PYRAB08710</name>
    <name type="ORF">PAB1782</name>
</gene>
<reference key="1">
    <citation type="journal article" date="2003" name="Mol. Microbiol.">
        <title>An integrated analysis of the genome of the hyperthermophilic archaeon Pyrococcus abyssi.</title>
        <authorList>
            <person name="Cohen G.N."/>
            <person name="Barbe V."/>
            <person name="Flament D."/>
            <person name="Galperin M."/>
            <person name="Heilig R."/>
            <person name="Lecompte O."/>
            <person name="Poch O."/>
            <person name="Prieur D."/>
            <person name="Querellou J."/>
            <person name="Ripp R."/>
            <person name="Thierry J.-C."/>
            <person name="Van der Oost J."/>
            <person name="Weissenbach J."/>
            <person name="Zivanovic Y."/>
            <person name="Forterre P."/>
        </authorList>
    </citation>
    <scope>NUCLEOTIDE SEQUENCE [LARGE SCALE GENOMIC DNA]</scope>
    <source>
        <strain>GE5 / Orsay</strain>
    </source>
</reference>
<reference key="2">
    <citation type="journal article" date="2012" name="Curr. Microbiol.">
        <title>Re-annotation of two hyperthermophilic archaea Pyrococcus abyssi GE5 and Pyrococcus furiosus DSM 3638.</title>
        <authorList>
            <person name="Gao J."/>
            <person name="Wang J."/>
        </authorList>
    </citation>
    <scope>GENOME REANNOTATION</scope>
    <source>
        <strain>GE5 / Orsay</strain>
    </source>
</reference>
<evidence type="ECO:0000255" key="1">
    <source>
        <dbReference type="HAMAP-Rule" id="MF_00049"/>
    </source>
</evidence>
<proteinExistence type="inferred from homology"/>
<dbReference type="EC" id="6.1.1.4" evidence="1"/>
<dbReference type="EMBL" id="AJ248285">
    <property type="protein sequence ID" value="CAB49785.1"/>
    <property type="molecule type" value="Genomic_DNA"/>
</dbReference>
<dbReference type="EMBL" id="HE613800">
    <property type="protein sequence ID" value="CCE70276.1"/>
    <property type="molecule type" value="Genomic_DNA"/>
</dbReference>
<dbReference type="PIR" id="H75133">
    <property type="entry name" value="H75133"/>
</dbReference>
<dbReference type="RefSeq" id="WP_010867994.1">
    <property type="nucleotide sequence ID" value="NC_000868.1"/>
</dbReference>
<dbReference type="SMR" id="Q9V0B9"/>
<dbReference type="STRING" id="272844.PAB1782"/>
<dbReference type="KEGG" id="pab:PAB1782"/>
<dbReference type="PATRIC" id="fig|272844.11.peg.919"/>
<dbReference type="eggNOG" id="arCOG00809">
    <property type="taxonomic scope" value="Archaea"/>
</dbReference>
<dbReference type="HOGENOM" id="CLU_004174_0_0_2"/>
<dbReference type="OrthoDB" id="23906at2157"/>
<dbReference type="PhylomeDB" id="Q9V0B9"/>
<dbReference type="Proteomes" id="UP000000810">
    <property type="component" value="Chromosome"/>
</dbReference>
<dbReference type="Proteomes" id="UP000009139">
    <property type="component" value="Chromosome"/>
</dbReference>
<dbReference type="GO" id="GO:0005737">
    <property type="term" value="C:cytoplasm"/>
    <property type="evidence" value="ECO:0007669"/>
    <property type="project" value="UniProtKB-SubCell"/>
</dbReference>
<dbReference type="GO" id="GO:0002161">
    <property type="term" value="F:aminoacyl-tRNA deacylase activity"/>
    <property type="evidence" value="ECO:0007669"/>
    <property type="project" value="InterPro"/>
</dbReference>
<dbReference type="GO" id="GO:0005524">
    <property type="term" value="F:ATP binding"/>
    <property type="evidence" value="ECO:0007669"/>
    <property type="project" value="UniProtKB-UniRule"/>
</dbReference>
<dbReference type="GO" id="GO:0004823">
    <property type="term" value="F:leucine-tRNA ligase activity"/>
    <property type="evidence" value="ECO:0007669"/>
    <property type="project" value="UniProtKB-UniRule"/>
</dbReference>
<dbReference type="GO" id="GO:0006429">
    <property type="term" value="P:leucyl-tRNA aminoacylation"/>
    <property type="evidence" value="ECO:0007669"/>
    <property type="project" value="UniProtKB-UniRule"/>
</dbReference>
<dbReference type="CDD" id="cd07959">
    <property type="entry name" value="Anticodon_Ia_Leu_AEc"/>
    <property type="match status" value="1"/>
</dbReference>
<dbReference type="CDD" id="cd00812">
    <property type="entry name" value="LeuRS_core"/>
    <property type="match status" value="1"/>
</dbReference>
<dbReference type="FunFam" id="1.10.730.10:FF:000051">
    <property type="entry name" value="Leucine--tRNA ligase"/>
    <property type="match status" value="1"/>
</dbReference>
<dbReference type="FunFam" id="3.90.740.10:FF:000024">
    <property type="entry name" value="Leucine--tRNA ligase"/>
    <property type="match status" value="1"/>
</dbReference>
<dbReference type="Gene3D" id="3.30.2320.20">
    <property type="entry name" value="Class I aminoacyl-tRNA synthetases (RS)"/>
    <property type="match status" value="1"/>
</dbReference>
<dbReference type="Gene3D" id="3.40.50.620">
    <property type="entry name" value="HUPs"/>
    <property type="match status" value="1"/>
</dbReference>
<dbReference type="Gene3D" id="1.10.730.10">
    <property type="entry name" value="Isoleucyl-tRNA Synthetase, Domain 1"/>
    <property type="match status" value="1"/>
</dbReference>
<dbReference type="Gene3D" id="1.10.10.720">
    <property type="entry name" value="leucyl-tRNA synthetase"/>
    <property type="match status" value="1"/>
</dbReference>
<dbReference type="Gene3D" id="3.90.740.10">
    <property type="entry name" value="Valyl/Leucyl/Isoleucyl-tRNA synthetase, editing domain"/>
    <property type="match status" value="1"/>
</dbReference>
<dbReference type="HAMAP" id="MF_00049_A">
    <property type="entry name" value="Leu_tRNA_synth_A"/>
    <property type="match status" value="1"/>
</dbReference>
<dbReference type="InterPro" id="IPR001412">
    <property type="entry name" value="aa-tRNA-synth_I_CS"/>
</dbReference>
<dbReference type="InterPro" id="IPR002300">
    <property type="entry name" value="aa-tRNA-synth_Ia"/>
</dbReference>
<dbReference type="InterPro" id="IPR020791">
    <property type="entry name" value="Leu-tRNA-lgase_arc"/>
</dbReference>
<dbReference type="InterPro" id="IPR004493">
    <property type="entry name" value="Leu-tRNA-synth_Ia_arc/euk"/>
</dbReference>
<dbReference type="InterPro" id="IPR013155">
    <property type="entry name" value="M/V/L/I-tRNA-synth_anticd-bd"/>
</dbReference>
<dbReference type="InterPro" id="IPR014729">
    <property type="entry name" value="Rossmann-like_a/b/a_fold"/>
</dbReference>
<dbReference type="InterPro" id="IPR009080">
    <property type="entry name" value="tRNAsynth_Ia_anticodon-bd"/>
</dbReference>
<dbReference type="InterPro" id="IPR009008">
    <property type="entry name" value="Val/Leu/Ile-tRNA-synth_edit"/>
</dbReference>
<dbReference type="NCBIfam" id="TIGR00395">
    <property type="entry name" value="leuS_arch"/>
    <property type="match status" value="1"/>
</dbReference>
<dbReference type="NCBIfam" id="NF008957">
    <property type="entry name" value="PRK12300.1"/>
    <property type="match status" value="1"/>
</dbReference>
<dbReference type="PANTHER" id="PTHR45794:SF1">
    <property type="entry name" value="LEUCINE--TRNA LIGASE, CYTOPLASMIC"/>
    <property type="match status" value="1"/>
</dbReference>
<dbReference type="PANTHER" id="PTHR45794">
    <property type="entry name" value="LEUCYL-TRNA SYNTHETASE"/>
    <property type="match status" value="1"/>
</dbReference>
<dbReference type="Pfam" id="PF08264">
    <property type="entry name" value="Anticodon_1"/>
    <property type="match status" value="1"/>
</dbReference>
<dbReference type="Pfam" id="PF00133">
    <property type="entry name" value="tRNA-synt_1"/>
    <property type="match status" value="1"/>
</dbReference>
<dbReference type="SUPFAM" id="SSF47323">
    <property type="entry name" value="Anticodon-binding domain of a subclass of class I aminoacyl-tRNA synthetases"/>
    <property type="match status" value="1"/>
</dbReference>
<dbReference type="SUPFAM" id="SSF52374">
    <property type="entry name" value="Nucleotidylyl transferase"/>
    <property type="match status" value="1"/>
</dbReference>
<dbReference type="SUPFAM" id="SSF50677">
    <property type="entry name" value="ValRS/IleRS/LeuRS editing domain"/>
    <property type="match status" value="1"/>
</dbReference>
<dbReference type="PROSITE" id="PS00178">
    <property type="entry name" value="AA_TRNA_LIGASE_I"/>
    <property type="match status" value="1"/>
</dbReference>
<name>SYL_PYRAB</name>
<accession>Q9V0B9</accession>
<accession>G8ZI35</accession>
<comment type="catalytic activity">
    <reaction evidence="1">
        <text>tRNA(Leu) + L-leucine + ATP = L-leucyl-tRNA(Leu) + AMP + diphosphate</text>
        <dbReference type="Rhea" id="RHEA:11688"/>
        <dbReference type="Rhea" id="RHEA-COMP:9613"/>
        <dbReference type="Rhea" id="RHEA-COMP:9622"/>
        <dbReference type="ChEBI" id="CHEBI:30616"/>
        <dbReference type="ChEBI" id="CHEBI:33019"/>
        <dbReference type="ChEBI" id="CHEBI:57427"/>
        <dbReference type="ChEBI" id="CHEBI:78442"/>
        <dbReference type="ChEBI" id="CHEBI:78494"/>
        <dbReference type="ChEBI" id="CHEBI:456215"/>
        <dbReference type="EC" id="6.1.1.4"/>
    </reaction>
</comment>
<comment type="subcellular location">
    <subcellularLocation>
        <location evidence="1">Cytoplasm</location>
    </subcellularLocation>
</comment>
<comment type="similarity">
    <text evidence="1">Belongs to the class-I aminoacyl-tRNA synthetase family.</text>
</comment>
<feature type="chain" id="PRO_0000152137" description="Leucine--tRNA ligase">
    <location>
        <begin position="1"/>
        <end position="967"/>
    </location>
</feature>
<feature type="short sequence motif" description="'HIGH' region">
    <location>
        <begin position="43"/>
        <end position="53"/>
    </location>
</feature>
<feature type="short sequence motif" description="'KMSKS' region">
    <location>
        <begin position="650"/>
        <end position="654"/>
    </location>
</feature>
<feature type="binding site" evidence="1">
    <location>
        <position position="653"/>
    </location>
    <ligand>
        <name>ATP</name>
        <dbReference type="ChEBI" id="CHEBI:30616"/>
    </ligand>
</feature>
<organism>
    <name type="scientific">Pyrococcus abyssi (strain GE5 / Orsay)</name>
    <dbReference type="NCBI Taxonomy" id="272844"/>
    <lineage>
        <taxon>Archaea</taxon>
        <taxon>Methanobacteriati</taxon>
        <taxon>Methanobacteriota</taxon>
        <taxon>Thermococci</taxon>
        <taxon>Thermococcales</taxon>
        <taxon>Thermococcaceae</taxon>
        <taxon>Pyrococcus</taxon>
    </lineage>
</organism>